<sequence>MSLSAAEADLAGKSWAPVFANKDANGDAFLVALFEKFPDSANFFADFKGKSVADIKASPKLRDVSSRIFTRLNEFVNNAADAGKMSAMLSQFAKEHVGFGVGSAQFENVRSMFPGFVASVAAPPAGADAAWTKLFGLIIDALKAAGK</sequence>
<reference key="1">
    <citation type="journal article" date="1996" name="Biochem. J.">
        <title>Aplysia limacina myoglobin cDNA cloning: an alternative mechanism of oxygen stabilization as studied by active-site mutagenesis.</title>
        <authorList>
            <person name="Cutruzzola F."/>
            <person name="Travaglini Allocatelli C."/>
            <person name="Brancaccio A."/>
            <person name="Brunori M."/>
        </authorList>
    </citation>
    <scope>NUCLEOTIDE SEQUENCE [MRNA]</scope>
    <scope>PARTIAL PROTEIN SEQUENCE</scope>
</reference>
<reference key="2">
    <citation type="journal article" date="1973" name="Int. J. Pept. Protein Res.">
        <title>The amino acid sequence of myoglobin from the mollusc Aplysia limacina.</title>
        <authorList>
            <person name="Tentori L."/>
            <person name="Vivaldi G."/>
            <person name="Carta S."/>
            <person name="Marinucci M."/>
            <person name="Massa A."/>
            <person name="Antonini E."/>
            <person name="Brunori M."/>
        </authorList>
    </citation>
    <scope>PROTEIN SEQUENCE OF 2-147</scope>
    <scope>ACETYLATION AT SER-2</scope>
    <source>
        <tissue>Buccal muscle</tissue>
    </source>
</reference>
<reference key="3">
    <citation type="journal article" date="1989" name="J. Mol. Biol.">
        <title>Aplysia limacina myoglobin. Crystallographic analysis at 1.6-A resolution.</title>
        <authorList>
            <person name="Bolognesi M."/>
            <person name="Onesti S."/>
            <person name="Gatti G."/>
            <person name="Coda A."/>
            <person name="Ascenzi P."/>
            <person name="Brunori M."/>
        </authorList>
    </citation>
    <scope>X-RAY CRYSTALLOGRAPHY (1.6 ANGSTROMS)</scope>
</reference>
<reference key="4">
    <citation type="journal article" date="1991" name="J. Mol. Recognit.">
        <title>Binding mode of azide to ferric Aplysia limacina myoglobin. Crystallographic analysis at 1.9-A resolution.</title>
        <authorList>
            <person name="Mattevi A."/>
            <person name="Gatti G."/>
            <person name="Coda A."/>
            <person name="Rizzi M."/>
            <person name="Ascenzi P."/>
            <person name="Brunori M."/>
            <person name="Bolognesi M."/>
        </authorList>
    </citation>
    <scope>X-RAY CRYSTALLOGRAPHY (1.9 ANGSTROMS)</scope>
    <scope>SEQUENCE REVISION</scope>
</reference>
<reference key="5">
    <citation type="journal article" date="2000" name="Biochem. Biophys. Res. Commun.">
        <title>Engineering His(E7) affects the control of heme reactivity in Aplysia limacina myoglobin.</title>
        <authorList>
            <person name="Federici L."/>
            <person name="Savino C."/>
            <person name="Musto R."/>
            <person name="Travaglini-Allocatelli C."/>
            <person name="Cutruzzola F."/>
            <person name="Brunori M."/>
        </authorList>
    </citation>
    <scope>X-RAY CRYSTALLOGRAPHY (1.99 ANGSTROMS)</scope>
</reference>
<organism>
    <name type="scientific">Aplysia limacina</name>
    <name type="common">Sea hare</name>
    <dbReference type="NCBI Taxonomy" id="6502"/>
    <lineage>
        <taxon>Eukaryota</taxon>
        <taxon>Metazoa</taxon>
        <taxon>Spiralia</taxon>
        <taxon>Lophotrochozoa</taxon>
        <taxon>Mollusca</taxon>
        <taxon>Gastropoda</taxon>
        <taxon>Heterobranchia</taxon>
        <taxon>Euthyneura</taxon>
        <taxon>Tectipleura</taxon>
        <taxon>Aplysiida</taxon>
        <taxon>Aplysioidea</taxon>
        <taxon>Aplysiidae</taxon>
        <taxon>Aplysia</taxon>
    </lineage>
</organism>
<accession>P02210</accession>
<accession>Q93114</accession>
<feature type="initiator methionine" description="Removed" evidence="2">
    <location>
        <position position="1"/>
    </location>
</feature>
<feature type="chain" id="PRO_0000052473" description="Globin">
    <location>
        <begin position="2"/>
        <end position="147"/>
    </location>
</feature>
<feature type="domain" description="Globin" evidence="1">
    <location>
        <begin position="2"/>
        <end position="147"/>
    </location>
</feature>
<feature type="binding site" description="proximal binding residue">
    <location>
        <position position="96"/>
    </location>
    <ligand>
        <name>heme b</name>
        <dbReference type="ChEBI" id="CHEBI:60344"/>
    </ligand>
    <ligandPart>
        <name>Fe</name>
        <dbReference type="ChEBI" id="CHEBI:18248"/>
    </ligandPart>
</feature>
<feature type="modified residue" description="N-acetylserine" evidence="2">
    <location>
        <position position="2"/>
    </location>
</feature>
<feature type="sequence conflict" description="In Ref. 2; AA sequence." evidence="3" ref="2">
    <original>D</original>
    <variation>N</variation>
    <location>
        <position position="23"/>
    </location>
</feature>
<feature type="sequence conflict" description="In Ref. 2; AA sequence." evidence="3" ref="2">
    <original>DA</original>
    <variation>LD</variation>
    <location>
        <begin position="27"/>
        <end position="28"/>
    </location>
</feature>
<feature type="sequence conflict" description="In Ref. 2; AA sequence." evidence="3" ref="2">
    <original>N</original>
    <variation>D</variation>
    <location>
        <position position="78"/>
    </location>
</feature>
<feature type="sequence conflict" description="In Ref. 2; AA sequence." evidence="3" ref="2">
    <original>D</original>
    <variation>N</variation>
    <location>
        <position position="81"/>
    </location>
</feature>
<feature type="sequence conflict" description="In Ref. 2; AA sequence." evidence="3" ref="2">
    <location>
        <position position="130"/>
    </location>
</feature>
<feature type="helix" evidence="4">
    <location>
        <begin position="5"/>
        <end position="20"/>
    </location>
</feature>
<feature type="helix" evidence="4">
    <location>
        <begin position="22"/>
        <end position="36"/>
    </location>
</feature>
<feature type="helix" evidence="4">
    <location>
        <begin position="38"/>
        <end position="43"/>
    </location>
</feature>
<feature type="turn" evidence="4">
    <location>
        <begin position="45"/>
        <end position="49"/>
    </location>
</feature>
<feature type="helix" evidence="4">
    <location>
        <begin position="52"/>
        <end position="56"/>
    </location>
</feature>
<feature type="helix" evidence="4">
    <location>
        <begin position="61"/>
        <end position="78"/>
    </location>
</feature>
<feature type="helix" evidence="4">
    <location>
        <begin position="82"/>
        <end position="98"/>
    </location>
</feature>
<feature type="helix" evidence="4">
    <location>
        <begin position="103"/>
        <end position="118"/>
    </location>
</feature>
<feature type="helix" evidence="4">
    <location>
        <begin position="127"/>
        <end position="144"/>
    </location>
</feature>
<evidence type="ECO:0000255" key="1">
    <source>
        <dbReference type="PROSITE-ProRule" id="PRU00238"/>
    </source>
</evidence>
<evidence type="ECO:0000269" key="2">
    <source>
    </source>
</evidence>
<evidence type="ECO:0000305" key="3"/>
<evidence type="ECO:0007829" key="4">
    <source>
        <dbReference type="PDB" id="1MBA"/>
    </source>
</evidence>
<proteinExistence type="evidence at protein level"/>
<comment type="subunit">
    <text>Monomer.</text>
</comment>
<comment type="miscellaneous">
    <text>This molluscan globin lacks one of the heme-binding histidine residues found in most other globins.</text>
</comment>
<comment type="similarity">
    <text evidence="1">Belongs to the globin family.</text>
</comment>
<protein>
    <recommendedName>
        <fullName>Globin</fullName>
    </recommendedName>
    <alternativeName>
        <fullName>Myoglobin</fullName>
    </alternativeName>
</protein>
<dbReference type="EMBL" id="X79304">
    <property type="protein sequence ID" value="CAA55885.1"/>
    <property type="molecule type" value="mRNA"/>
</dbReference>
<dbReference type="PIR" id="S64703">
    <property type="entry name" value="GGGAA"/>
</dbReference>
<dbReference type="PDB" id="1DM1">
    <property type="method" value="X-ray"/>
    <property type="resolution" value="1.99 A"/>
    <property type="chains" value="A=2-147"/>
</dbReference>
<dbReference type="PDB" id="1MBA">
    <property type="method" value="X-ray"/>
    <property type="resolution" value="1.60 A"/>
    <property type="chains" value="A=2-146"/>
</dbReference>
<dbReference type="PDB" id="2FAL">
    <property type="method" value="X-ray"/>
    <property type="resolution" value="1.80 A"/>
    <property type="chains" value="A=2-146"/>
</dbReference>
<dbReference type="PDB" id="2FAM">
    <property type="method" value="X-ray"/>
    <property type="resolution" value="2.00 A"/>
    <property type="chains" value="A=2-147"/>
</dbReference>
<dbReference type="PDB" id="3MBA">
    <property type="method" value="X-ray"/>
    <property type="resolution" value="2.00 A"/>
    <property type="chains" value="A=2-146"/>
</dbReference>
<dbReference type="PDB" id="4MBA">
    <property type="method" value="X-ray"/>
    <property type="resolution" value="2.00 A"/>
    <property type="chains" value="A=2-146"/>
</dbReference>
<dbReference type="PDB" id="5MBA">
    <property type="method" value="X-ray"/>
    <property type="resolution" value="1.90 A"/>
    <property type="chains" value="A=2-146"/>
</dbReference>
<dbReference type="PDBsum" id="1DM1"/>
<dbReference type="PDBsum" id="1MBA"/>
<dbReference type="PDBsum" id="2FAL"/>
<dbReference type="PDBsum" id="2FAM"/>
<dbReference type="PDBsum" id="3MBA"/>
<dbReference type="PDBsum" id="4MBA"/>
<dbReference type="PDBsum" id="5MBA"/>
<dbReference type="SMR" id="P02210"/>
<dbReference type="iPTMnet" id="P02210"/>
<dbReference type="EvolutionaryTrace" id="P02210"/>
<dbReference type="GO" id="GO:0005576">
    <property type="term" value="C:extracellular region"/>
    <property type="evidence" value="ECO:0007669"/>
    <property type="project" value="InterPro"/>
</dbReference>
<dbReference type="GO" id="GO:0005833">
    <property type="term" value="C:hemoglobin complex"/>
    <property type="evidence" value="ECO:0007669"/>
    <property type="project" value="InterPro"/>
</dbReference>
<dbReference type="GO" id="GO:0020037">
    <property type="term" value="F:heme binding"/>
    <property type="evidence" value="ECO:0007669"/>
    <property type="project" value="InterPro"/>
</dbReference>
<dbReference type="GO" id="GO:0005506">
    <property type="term" value="F:iron ion binding"/>
    <property type="evidence" value="ECO:0007669"/>
    <property type="project" value="InterPro"/>
</dbReference>
<dbReference type="GO" id="GO:0016491">
    <property type="term" value="F:oxidoreductase activity"/>
    <property type="evidence" value="ECO:0007669"/>
    <property type="project" value="TreeGrafter"/>
</dbReference>
<dbReference type="GO" id="GO:0019825">
    <property type="term" value="F:oxygen binding"/>
    <property type="evidence" value="ECO:0007669"/>
    <property type="project" value="InterPro"/>
</dbReference>
<dbReference type="GO" id="GO:0005344">
    <property type="term" value="F:oxygen carrier activity"/>
    <property type="evidence" value="ECO:0007669"/>
    <property type="project" value="UniProtKB-KW"/>
</dbReference>
<dbReference type="CDD" id="cd01040">
    <property type="entry name" value="Mb-like"/>
    <property type="match status" value="1"/>
</dbReference>
<dbReference type="Gene3D" id="1.10.490.10">
    <property type="entry name" value="Globins"/>
    <property type="match status" value="1"/>
</dbReference>
<dbReference type="InterPro" id="IPR002336">
    <property type="entry name" value="Erythrocruorin"/>
</dbReference>
<dbReference type="InterPro" id="IPR000971">
    <property type="entry name" value="Globin"/>
</dbReference>
<dbReference type="InterPro" id="IPR009050">
    <property type="entry name" value="Globin-like_sf"/>
</dbReference>
<dbReference type="InterPro" id="IPR012292">
    <property type="entry name" value="Globin/Proto"/>
</dbReference>
<dbReference type="InterPro" id="IPR013314">
    <property type="entry name" value="Globin_lamprey/hagfish"/>
</dbReference>
<dbReference type="InterPro" id="IPR044399">
    <property type="entry name" value="Mb-like_M"/>
</dbReference>
<dbReference type="PANTHER" id="PTHR46783">
    <property type="entry name" value="CYTOGLOBIN"/>
    <property type="match status" value="1"/>
</dbReference>
<dbReference type="PANTHER" id="PTHR46783:SF1">
    <property type="entry name" value="CYTOGLOBIN-1-RELATED"/>
    <property type="match status" value="1"/>
</dbReference>
<dbReference type="Pfam" id="PF00042">
    <property type="entry name" value="Globin"/>
    <property type="match status" value="1"/>
</dbReference>
<dbReference type="PRINTS" id="PR00611">
    <property type="entry name" value="ERYTHCRUORIN"/>
</dbReference>
<dbReference type="SUPFAM" id="SSF46458">
    <property type="entry name" value="Globin-like"/>
    <property type="match status" value="1"/>
</dbReference>
<dbReference type="PROSITE" id="PS01033">
    <property type="entry name" value="GLOBIN"/>
    <property type="match status" value="1"/>
</dbReference>
<name>GLB_APLLI</name>
<keyword id="KW-0002">3D-structure</keyword>
<keyword id="KW-0007">Acetylation</keyword>
<keyword id="KW-0903">Direct protein sequencing</keyword>
<keyword id="KW-0349">Heme</keyword>
<keyword id="KW-0408">Iron</keyword>
<keyword id="KW-0479">Metal-binding</keyword>
<keyword id="KW-0514">Muscle protein</keyword>
<keyword id="KW-0561">Oxygen transport</keyword>
<keyword id="KW-0813">Transport</keyword>